<sequence>MAVKKILLLNGPNLNLLGTREPHIYGYDTLASIESSLTTYLSSLTPSVTLLSFQTNWEGALIDRIHEARTDGTDAIVINPGAFTHYSIALRDALTGVDIPFVEVHISNVHKREEFRHKSFLSDKAEAVICGLGVYGYRAAVEWCVGYLKEKPKA</sequence>
<organism>
    <name type="scientific">Botryotinia fuckeliana (strain B05.10)</name>
    <name type="common">Noble rot fungus</name>
    <name type="synonym">Botrytis cinerea</name>
    <dbReference type="NCBI Taxonomy" id="332648"/>
    <lineage>
        <taxon>Eukaryota</taxon>
        <taxon>Fungi</taxon>
        <taxon>Dikarya</taxon>
        <taxon>Ascomycota</taxon>
        <taxon>Pezizomycotina</taxon>
        <taxon>Leotiomycetes</taxon>
        <taxon>Helotiales</taxon>
        <taxon>Sclerotiniaceae</taxon>
        <taxon>Botrytis</taxon>
    </lineage>
</organism>
<name>3DHQ_BOTFB</name>
<evidence type="ECO:0000255" key="1">
    <source>
        <dbReference type="HAMAP-Rule" id="MF_03136"/>
    </source>
</evidence>
<keyword id="KW-0456">Lyase</keyword>
<keyword id="KW-0672">Quinate metabolism</keyword>
<keyword id="KW-1185">Reference proteome</keyword>
<protein>
    <recommendedName>
        <fullName evidence="1">Catabolic 3-dehydroquinase</fullName>
        <shortName evidence="1">cDHQase</shortName>
        <ecNumber evidence="1">4.2.1.10</ecNumber>
    </recommendedName>
    <alternativeName>
        <fullName evidence="1">3-dehydroquinate dehydratase</fullName>
    </alternativeName>
</protein>
<comment type="function">
    <text evidence="1">Is involved in the catabolism of quinate. Allows the utilization of quinate as carbon source via the beta-ketoadipate pathway.</text>
</comment>
<comment type="catalytic activity">
    <reaction evidence="1">
        <text>3-dehydroquinate = 3-dehydroshikimate + H2O</text>
        <dbReference type="Rhea" id="RHEA:21096"/>
        <dbReference type="ChEBI" id="CHEBI:15377"/>
        <dbReference type="ChEBI" id="CHEBI:16630"/>
        <dbReference type="ChEBI" id="CHEBI:32364"/>
        <dbReference type="EC" id="4.2.1.10"/>
    </reaction>
</comment>
<comment type="pathway">
    <text evidence="1">Aromatic compound metabolism; 3,4-dihydroxybenzoate biosynthesis; 3,4-dihydroxybenzoate from 3-dehydroquinate: step 1/2.</text>
</comment>
<comment type="subunit">
    <text evidence="1">Homododecamer. Adopts a ring-like structure, composed of an arrangement of two hexameric rings stacked on top of one another.</text>
</comment>
<comment type="similarity">
    <text evidence="1">Belongs to the type-II 3-dehydroquinase family.</text>
</comment>
<feature type="chain" id="PRO_0000402360" description="Catabolic 3-dehydroquinase">
    <location>
        <begin position="1"/>
        <end position="154"/>
    </location>
</feature>
<feature type="active site" description="Proton acceptor" evidence="1">
    <location>
        <position position="25"/>
    </location>
</feature>
<feature type="active site" description="Proton donor" evidence="1">
    <location>
        <position position="105"/>
    </location>
</feature>
<feature type="binding site" evidence="1">
    <location>
        <position position="79"/>
    </location>
    <ligand>
        <name>substrate</name>
    </ligand>
</feature>
<feature type="binding site" evidence="1">
    <location>
        <position position="85"/>
    </location>
    <ligand>
        <name>substrate</name>
    </ligand>
</feature>
<feature type="binding site" evidence="1">
    <location>
        <position position="92"/>
    </location>
    <ligand>
        <name>substrate</name>
    </ligand>
</feature>
<feature type="binding site" evidence="1">
    <location>
        <begin position="106"/>
        <end position="107"/>
    </location>
    <ligand>
        <name>substrate</name>
    </ligand>
</feature>
<feature type="binding site" evidence="1">
    <location>
        <position position="116"/>
    </location>
    <ligand>
        <name>substrate</name>
    </ligand>
</feature>
<feature type="site" description="Transition state stabilizer" evidence="1">
    <location>
        <position position="20"/>
    </location>
</feature>
<reference key="1">
    <citation type="journal article" date="2011" name="PLoS Genet.">
        <title>Genomic analysis of the necrotrophic fungal pathogens Sclerotinia sclerotiorum and Botrytis cinerea.</title>
        <authorList>
            <person name="Amselem J."/>
            <person name="Cuomo C.A."/>
            <person name="van Kan J.A.L."/>
            <person name="Viaud M."/>
            <person name="Benito E.P."/>
            <person name="Couloux A."/>
            <person name="Coutinho P.M."/>
            <person name="de Vries R.P."/>
            <person name="Dyer P.S."/>
            <person name="Fillinger S."/>
            <person name="Fournier E."/>
            <person name="Gout L."/>
            <person name="Hahn M."/>
            <person name="Kohn L."/>
            <person name="Lapalu N."/>
            <person name="Plummer K.M."/>
            <person name="Pradier J.-M."/>
            <person name="Quevillon E."/>
            <person name="Sharon A."/>
            <person name="Simon A."/>
            <person name="ten Have A."/>
            <person name="Tudzynski B."/>
            <person name="Tudzynski P."/>
            <person name="Wincker P."/>
            <person name="Andrew M."/>
            <person name="Anthouard V."/>
            <person name="Beever R.E."/>
            <person name="Beffa R."/>
            <person name="Benoit I."/>
            <person name="Bouzid O."/>
            <person name="Brault B."/>
            <person name="Chen Z."/>
            <person name="Choquer M."/>
            <person name="Collemare J."/>
            <person name="Cotton P."/>
            <person name="Danchin E.G."/>
            <person name="Da Silva C."/>
            <person name="Gautier A."/>
            <person name="Giraud C."/>
            <person name="Giraud T."/>
            <person name="Gonzalez C."/>
            <person name="Grossetete S."/>
            <person name="Gueldener U."/>
            <person name="Henrissat B."/>
            <person name="Howlett B.J."/>
            <person name="Kodira C."/>
            <person name="Kretschmer M."/>
            <person name="Lappartient A."/>
            <person name="Leroch M."/>
            <person name="Levis C."/>
            <person name="Mauceli E."/>
            <person name="Neuveglise C."/>
            <person name="Oeser B."/>
            <person name="Pearson M."/>
            <person name="Poulain J."/>
            <person name="Poussereau N."/>
            <person name="Quesneville H."/>
            <person name="Rascle C."/>
            <person name="Schumacher J."/>
            <person name="Segurens B."/>
            <person name="Sexton A."/>
            <person name="Silva E."/>
            <person name="Sirven C."/>
            <person name="Soanes D.M."/>
            <person name="Talbot N.J."/>
            <person name="Templeton M."/>
            <person name="Yandava C."/>
            <person name="Yarden O."/>
            <person name="Zeng Q."/>
            <person name="Rollins J.A."/>
            <person name="Lebrun M.-H."/>
            <person name="Dickman M."/>
        </authorList>
    </citation>
    <scope>NUCLEOTIDE SEQUENCE [LARGE SCALE GENOMIC DNA]</scope>
    <source>
        <strain>B05.10</strain>
    </source>
</reference>
<reference key="2">
    <citation type="journal article" date="2012" name="Eukaryot. Cell">
        <title>Genome update of Botrytis cinerea strains B05.10 and T4.</title>
        <authorList>
            <person name="Staats M."/>
            <person name="van Kan J.A.L."/>
        </authorList>
    </citation>
    <scope>NUCLEOTIDE SEQUENCE [LARGE SCALE GENOMIC DNA]</scope>
    <scope>GENOME REANNOTATION</scope>
    <source>
        <strain>B05.10</strain>
    </source>
</reference>
<reference key="3">
    <citation type="journal article" date="2017" name="Mol. Plant Pathol.">
        <title>A gapless genome sequence of the fungus Botrytis cinerea.</title>
        <authorList>
            <person name="van Kan J.A.L."/>
            <person name="Stassen J.H.M."/>
            <person name="Mosbach A."/>
            <person name="van der Lee T.A.J."/>
            <person name="Faino L."/>
            <person name="Farmer A.D."/>
            <person name="Papasotiriou D.G."/>
            <person name="Zhou S."/>
            <person name="Seidl M.F."/>
            <person name="Cottam E."/>
            <person name="Edel D."/>
            <person name="Hahn M."/>
            <person name="Schwartz D.C."/>
            <person name="Dietrich R.A."/>
            <person name="Widdison S."/>
            <person name="Scalliet G."/>
        </authorList>
    </citation>
    <scope>NUCLEOTIDE SEQUENCE [LARGE SCALE GENOMIC DNA]</scope>
    <scope>GENOME REANNOTATION</scope>
    <source>
        <strain>B05.10</strain>
    </source>
</reference>
<accession>A6S694</accession>
<accession>A0A384JTI0</accession>
<gene>
    <name evidence="1" type="primary">qutE</name>
    <name type="ORF">BC1G_07683</name>
    <name type="ORF">BCIN_09g06570</name>
</gene>
<dbReference type="EC" id="4.2.1.10" evidence="1"/>
<dbReference type="EMBL" id="CP009813">
    <property type="protein sequence ID" value="ATZ53896.1"/>
    <property type="molecule type" value="Genomic_DNA"/>
</dbReference>
<dbReference type="RefSeq" id="XP_001553270.1">
    <property type="nucleotide sequence ID" value="XM_001553220.1"/>
</dbReference>
<dbReference type="SMR" id="A6S694"/>
<dbReference type="EnsemblFungi" id="Bcin09g06570.1">
    <property type="protein sequence ID" value="Bcin09p06570.1"/>
    <property type="gene ID" value="Bcin09g06570"/>
</dbReference>
<dbReference type="GeneID" id="5433801"/>
<dbReference type="KEGG" id="bfu:BCIN_09g06570"/>
<dbReference type="VEuPathDB" id="FungiDB:Bcin09g06570"/>
<dbReference type="OMA" id="AYTHYSY"/>
<dbReference type="OrthoDB" id="8191625at2759"/>
<dbReference type="UniPathway" id="UPA00088">
    <property type="reaction ID" value="UER00178"/>
</dbReference>
<dbReference type="Proteomes" id="UP000001798">
    <property type="component" value="Chromosome bcin09"/>
</dbReference>
<dbReference type="GO" id="GO:0003855">
    <property type="term" value="F:3-dehydroquinate dehydratase activity"/>
    <property type="evidence" value="ECO:0007669"/>
    <property type="project" value="UniProtKB-UniRule"/>
</dbReference>
<dbReference type="GO" id="GO:0046279">
    <property type="term" value="P:3,4-dihydroxybenzoate biosynthetic process"/>
    <property type="evidence" value="ECO:0007669"/>
    <property type="project" value="UniProtKB-UniRule"/>
</dbReference>
<dbReference type="GO" id="GO:0019631">
    <property type="term" value="P:quinate catabolic process"/>
    <property type="evidence" value="ECO:0007669"/>
    <property type="project" value="TreeGrafter"/>
</dbReference>
<dbReference type="CDD" id="cd00466">
    <property type="entry name" value="DHQase_II"/>
    <property type="match status" value="1"/>
</dbReference>
<dbReference type="Gene3D" id="3.40.50.9100">
    <property type="entry name" value="Dehydroquinase, class II"/>
    <property type="match status" value="1"/>
</dbReference>
<dbReference type="HAMAP" id="MF_00169">
    <property type="entry name" value="AroQ"/>
    <property type="match status" value="1"/>
</dbReference>
<dbReference type="InterPro" id="IPR001874">
    <property type="entry name" value="DHquinase_II"/>
</dbReference>
<dbReference type="InterPro" id="IPR018509">
    <property type="entry name" value="DHquinase_II_CS"/>
</dbReference>
<dbReference type="InterPro" id="IPR036441">
    <property type="entry name" value="DHquinase_II_sf"/>
</dbReference>
<dbReference type="NCBIfam" id="TIGR01088">
    <property type="entry name" value="aroQ"/>
    <property type="match status" value="1"/>
</dbReference>
<dbReference type="NCBIfam" id="NF003804">
    <property type="entry name" value="PRK05395.1-1"/>
    <property type="match status" value="1"/>
</dbReference>
<dbReference type="NCBIfam" id="NF003805">
    <property type="entry name" value="PRK05395.1-2"/>
    <property type="match status" value="1"/>
</dbReference>
<dbReference type="NCBIfam" id="NF003806">
    <property type="entry name" value="PRK05395.1-3"/>
    <property type="match status" value="1"/>
</dbReference>
<dbReference type="NCBIfam" id="NF003807">
    <property type="entry name" value="PRK05395.1-4"/>
    <property type="match status" value="1"/>
</dbReference>
<dbReference type="PANTHER" id="PTHR21272">
    <property type="entry name" value="CATABOLIC 3-DEHYDROQUINASE"/>
    <property type="match status" value="1"/>
</dbReference>
<dbReference type="PANTHER" id="PTHR21272:SF3">
    <property type="entry name" value="CATABOLIC 3-DEHYDROQUINASE"/>
    <property type="match status" value="1"/>
</dbReference>
<dbReference type="Pfam" id="PF01220">
    <property type="entry name" value="DHquinase_II"/>
    <property type="match status" value="1"/>
</dbReference>
<dbReference type="PIRSF" id="PIRSF001399">
    <property type="entry name" value="DHquinase_II"/>
    <property type="match status" value="1"/>
</dbReference>
<dbReference type="SUPFAM" id="SSF52304">
    <property type="entry name" value="Type II 3-dehydroquinate dehydratase"/>
    <property type="match status" value="1"/>
</dbReference>
<dbReference type="PROSITE" id="PS01029">
    <property type="entry name" value="DEHYDROQUINASE_II"/>
    <property type="match status" value="1"/>
</dbReference>
<proteinExistence type="inferred from homology"/>